<organism>
    <name type="scientific">Shewanella baltica (strain OS155 / ATCC BAA-1091)</name>
    <dbReference type="NCBI Taxonomy" id="325240"/>
    <lineage>
        <taxon>Bacteria</taxon>
        <taxon>Pseudomonadati</taxon>
        <taxon>Pseudomonadota</taxon>
        <taxon>Gammaproteobacteria</taxon>
        <taxon>Alteromonadales</taxon>
        <taxon>Shewanellaceae</taxon>
        <taxon>Shewanella</taxon>
    </lineage>
</organism>
<name>URK_SHEB5</name>
<feature type="chain" id="PRO_1000017891" description="Uridine kinase">
    <location>
        <begin position="1"/>
        <end position="212"/>
    </location>
</feature>
<feature type="binding site" evidence="1">
    <location>
        <begin position="13"/>
        <end position="20"/>
    </location>
    <ligand>
        <name>ATP</name>
        <dbReference type="ChEBI" id="CHEBI:30616"/>
    </ligand>
</feature>
<comment type="catalytic activity">
    <reaction evidence="1">
        <text>uridine + ATP = UMP + ADP + H(+)</text>
        <dbReference type="Rhea" id="RHEA:16825"/>
        <dbReference type="ChEBI" id="CHEBI:15378"/>
        <dbReference type="ChEBI" id="CHEBI:16704"/>
        <dbReference type="ChEBI" id="CHEBI:30616"/>
        <dbReference type="ChEBI" id="CHEBI:57865"/>
        <dbReference type="ChEBI" id="CHEBI:456216"/>
        <dbReference type="EC" id="2.7.1.48"/>
    </reaction>
</comment>
<comment type="catalytic activity">
    <reaction evidence="1">
        <text>cytidine + ATP = CMP + ADP + H(+)</text>
        <dbReference type="Rhea" id="RHEA:24674"/>
        <dbReference type="ChEBI" id="CHEBI:15378"/>
        <dbReference type="ChEBI" id="CHEBI:17562"/>
        <dbReference type="ChEBI" id="CHEBI:30616"/>
        <dbReference type="ChEBI" id="CHEBI:60377"/>
        <dbReference type="ChEBI" id="CHEBI:456216"/>
        <dbReference type="EC" id="2.7.1.48"/>
    </reaction>
</comment>
<comment type="pathway">
    <text evidence="1">Pyrimidine metabolism; CTP biosynthesis via salvage pathway; CTP from cytidine: step 1/3.</text>
</comment>
<comment type="pathway">
    <text evidence="1">Pyrimidine metabolism; UMP biosynthesis via salvage pathway; UMP from uridine: step 1/1.</text>
</comment>
<comment type="subcellular location">
    <subcellularLocation>
        <location evidence="1">Cytoplasm</location>
    </subcellularLocation>
</comment>
<comment type="similarity">
    <text evidence="1">Belongs to the uridine kinase family.</text>
</comment>
<reference key="1">
    <citation type="submission" date="2007-02" db="EMBL/GenBank/DDBJ databases">
        <title>Complete sequence of chromosome of Shewanella baltica OS155.</title>
        <authorList>
            <consortium name="US DOE Joint Genome Institute"/>
            <person name="Copeland A."/>
            <person name="Lucas S."/>
            <person name="Lapidus A."/>
            <person name="Barry K."/>
            <person name="Detter J.C."/>
            <person name="Glavina del Rio T."/>
            <person name="Hammon N."/>
            <person name="Israni S."/>
            <person name="Dalin E."/>
            <person name="Tice H."/>
            <person name="Pitluck S."/>
            <person name="Sims D.R."/>
            <person name="Brettin T."/>
            <person name="Bruce D."/>
            <person name="Han C."/>
            <person name="Tapia R."/>
            <person name="Brainard J."/>
            <person name="Schmutz J."/>
            <person name="Larimer F."/>
            <person name="Land M."/>
            <person name="Hauser L."/>
            <person name="Kyrpides N."/>
            <person name="Mikhailova N."/>
            <person name="Brettar I."/>
            <person name="Klappenbach J."/>
            <person name="Konstantinidis K."/>
            <person name="Rodrigues J."/>
            <person name="Tiedje J."/>
            <person name="Richardson P."/>
        </authorList>
    </citation>
    <scope>NUCLEOTIDE SEQUENCE [LARGE SCALE GENOMIC DNA]</scope>
    <source>
        <strain>OS155 / ATCC BAA-1091</strain>
    </source>
</reference>
<evidence type="ECO:0000255" key="1">
    <source>
        <dbReference type="HAMAP-Rule" id="MF_00551"/>
    </source>
</evidence>
<proteinExistence type="inferred from homology"/>
<dbReference type="EC" id="2.7.1.48" evidence="1"/>
<dbReference type="EMBL" id="CP000563">
    <property type="protein sequence ID" value="ABN61956.1"/>
    <property type="molecule type" value="Genomic_DNA"/>
</dbReference>
<dbReference type="RefSeq" id="WP_011846994.1">
    <property type="nucleotide sequence ID" value="NC_009052.1"/>
</dbReference>
<dbReference type="SMR" id="A3D5E3"/>
<dbReference type="STRING" id="325240.Sbal_2463"/>
<dbReference type="KEGG" id="sbl:Sbal_2463"/>
<dbReference type="HOGENOM" id="CLU_021278_1_2_6"/>
<dbReference type="OrthoDB" id="9777642at2"/>
<dbReference type="UniPathway" id="UPA00574">
    <property type="reaction ID" value="UER00637"/>
</dbReference>
<dbReference type="UniPathway" id="UPA00579">
    <property type="reaction ID" value="UER00640"/>
</dbReference>
<dbReference type="Proteomes" id="UP000001557">
    <property type="component" value="Chromosome"/>
</dbReference>
<dbReference type="GO" id="GO:0005737">
    <property type="term" value="C:cytoplasm"/>
    <property type="evidence" value="ECO:0007669"/>
    <property type="project" value="UniProtKB-SubCell"/>
</dbReference>
<dbReference type="GO" id="GO:0005524">
    <property type="term" value="F:ATP binding"/>
    <property type="evidence" value="ECO:0007669"/>
    <property type="project" value="UniProtKB-UniRule"/>
</dbReference>
<dbReference type="GO" id="GO:0043771">
    <property type="term" value="F:cytidine kinase activity"/>
    <property type="evidence" value="ECO:0007669"/>
    <property type="project" value="RHEA"/>
</dbReference>
<dbReference type="GO" id="GO:0004849">
    <property type="term" value="F:uridine kinase activity"/>
    <property type="evidence" value="ECO:0007669"/>
    <property type="project" value="UniProtKB-UniRule"/>
</dbReference>
<dbReference type="GO" id="GO:0044211">
    <property type="term" value="P:CTP salvage"/>
    <property type="evidence" value="ECO:0007669"/>
    <property type="project" value="UniProtKB-UniRule"/>
</dbReference>
<dbReference type="GO" id="GO:0044206">
    <property type="term" value="P:UMP salvage"/>
    <property type="evidence" value="ECO:0007669"/>
    <property type="project" value="UniProtKB-UniRule"/>
</dbReference>
<dbReference type="CDD" id="cd02023">
    <property type="entry name" value="UMPK"/>
    <property type="match status" value="1"/>
</dbReference>
<dbReference type="Gene3D" id="3.40.50.300">
    <property type="entry name" value="P-loop containing nucleotide triphosphate hydrolases"/>
    <property type="match status" value="1"/>
</dbReference>
<dbReference type="HAMAP" id="MF_00551">
    <property type="entry name" value="Uridine_kinase"/>
    <property type="match status" value="1"/>
</dbReference>
<dbReference type="InterPro" id="IPR027417">
    <property type="entry name" value="P-loop_NTPase"/>
</dbReference>
<dbReference type="InterPro" id="IPR006083">
    <property type="entry name" value="PRK/URK"/>
</dbReference>
<dbReference type="InterPro" id="IPR026008">
    <property type="entry name" value="Uridine_kinase"/>
</dbReference>
<dbReference type="InterPro" id="IPR000764">
    <property type="entry name" value="Uridine_kinase-like"/>
</dbReference>
<dbReference type="NCBIfam" id="NF004018">
    <property type="entry name" value="PRK05480.1"/>
    <property type="match status" value="1"/>
</dbReference>
<dbReference type="NCBIfam" id="TIGR00235">
    <property type="entry name" value="udk"/>
    <property type="match status" value="1"/>
</dbReference>
<dbReference type="PANTHER" id="PTHR10285">
    <property type="entry name" value="URIDINE KINASE"/>
    <property type="match status" value="1"/>
</dbReference>
<dbReference type="Pfam" id="PF00485">
    <property type="entry name" value="PRK"/>
    <property type="match status" value="1"/>
</dbReference>
<dbReference type="PRINTS" id="PR00988">
    <property type="entry name" value="URIDINKINASE"/>
</dbReference>
<dbReference type="SUPFAM" id="SSF52540">
    <property type="entry name" value="P-loop containing nucleoside triphosphate hydrolases"/>
    <property type="match status" value="1"/>
</dbReference>
<keyword id="KW-0067">ATP-binding</keyword>
<keyword id="KW-0963">Cytoplasm</keyword>
<keyword id="KW-0418">Kinase</keyword>
<keyword id="KW-0547">Nucleotide-binding</keyword>
<keyword id="KW-1185">Reference proteome</keyword>
<keyword id="KW-0808">Transferase</keyword>
<gene>
    <name evidence="1" type="primary">udk</name>
    <name type="ordered locus">Sbal_2463</name>
</gene>
<accession>A3D5E3</accession>
<protein>
    <recommendedName>
        <fullName evidence="1">Uridine kinase</fullName>
        <ecNumber evidence="1">2.7.1.48</ecNumber>
    </recommendedName>
    <alternativeName>
        <fullName evidence="1">Cytidine monophosphokinase</fullName>
    </alternativeName>
    <alternativeName>
        <fullName evidence="1">Uridine monophosphokinase</fullName>
    </alternativeName>
</protein>
<sequence length="212" mass="24020">MNSQQCVIIAIAGASASGKSLIAKTIFDELRRDLGTDQIGVINEDAYYRDQSHLSMDERVLTNYDHPKALDHQLLCTHLQLLKSGEAVDIPCYSYTEHTRTAETLTMTPKKVIILEGILLLTDPKLRALMDASVFMDTPLDICFLRRLTRDVAERGRTMESVISQYKKTVRPMFLQFIEPSKQYADIIVPRGGKNRIATDILKTRIQHLLAK</sequence>